<sequence length="1192" mass="134941">MARRSQSSSLGDNPLDPNYLRPHYREEYRMAIDALVEDDIEGYYNFLQNANVVDFLSRSEIENIKSTVQTPQSAGNVPELPYGEIDQDESSDTYWPLHSDLDAPGLDLGWPMQQHSFVGPTEVTMLVNPAEPERPSIKEQARRLIKNAHQVIAVVMDIFTDVDIFSDLLEAAARHVPVYILLDEQNAHYFVNMVASCKVNLEMIHMMRVRTVSGVTYFCRTGKSFKGQVMDRFLLTDCRAVISGNYSFMWSFEKIHRCIAHLFLGELVATFDEEFRILFAQSQPLVVENALVPMPQDSYLGNQFGLKRTQSLRNPRGYLRQPELGGYQYGDRLDSILPFRRDDPFRHTIEPSAGPMQVTKYATQQFRMQQSFLDQGRSMLASRQLEMNAFKRHSYAEGTRETYASSRQYMKQRVMNNLEETESHYQREQHYYQSEGMGHDDRGHYDRFNYGLADQHSDSGYPPELEAPGNINVLSSDDLKSDSEKQYNIGGRYDPQGHKRPAAGHAYACQSSPTQPHPPDQKQLFSTGDQVRQSQDPSVKQGLRSWRINSYLSTYEDGGEEGLHQPMGSDAFEDSHQQPDSRLYGSEGPGIHSNIRERPNIPTKPNLDLRPRFGKPIIQDRNQVKDNTSDLGPTSTDTLKPAISASSLASSTDNEKELAEPREISITKHESFRTRINPMLQRSSRLRSSLIFSSSKLEQHNSSQAKSGGELQEEKEESEPIRYSSIVAEILEKRRSLSREPFDWNKHKKADEKDVKHASTGDLTTIQDTKEEPIKEKEKPDNPKPEENKVTQPTVPSASQQITSSLNMNDPASRLQYFKDQQEKRKTSKLELDLGTKSQEAAIKKPETLDTATKVPDVLLTSEQSTVKAQEPTVSQTDPVPHRPVIETKPKPSEVSVDRPYTTNKTLTESIADAPKKEPVKEPTKSLKPFPSPKFLKPFKSSQSSSRRISCGEEILTDATDAEKSELKKSRSFSTSGMSRTESRESLSSLGNSESKDTKALDFLKKQTQRLKGILGPKGDKKHSGVSNSQEDKSMKTVPEVQEEISDKGKPSESISSSTAVENKPSAKPTTSRYQSSTSNIIFSSNLRDDTKVILEQISANSQKTRQQNEESGKGDGGKDDVANSPFQSRNRFSRAPVNPQERDNLLKRIESMRKEKKVYSRFEVLYRSREECCWERGSVEQANQFLIKSIE</sequence>
<name>FA83H_DANRE</name>
<comment type="function">
    <text evidence="1">May play a role in keratin cytoskeleton disassembly.</text>
</comment>
<comment type="subcellular location">
    <subcellularLocation>
        <location evidence="1">Cytoplasm</location>
        <location evidence="1">Cytoskeleton</location>
    </subcellularLocation>
    <text evidence="1">Colocalizes with keratin filaments.</text>
</comment>
<comment type="similarity">
    <text evidence="3">Belongs to the FAM83 family.</text>
</comment>
<proteinExistence type="inferred from homology"/>
<evidence type="ECO:0000250" key="1">
    <source>
        <dbReference type="UniProtKB" id="Q6ZRV2"/>
    </source>
</evidence>
<evidence type="ECO:0000256" key="2">
    <source>
        <dbReference type="SAM" id="MobiDB-lite"/>
    </source>
</evidence>
<evidence type="ECO:0000305" key="3"/>
<organism>
    <name type="scientific">Danio rerio</name>
    <name type="common">Zebrafish</name>
    <name type="synonym">Brachydanio rerio</name>
    <dbReference type="NCBI Taxonomy" id="7955"/>
    <lineage>
        <taxon>Eukaryota</taxon>
        <taxon>Metazoa</taxon>
        <taxon>Chordata</taxon>
        <taxon>Craniata</taxon>
        <taxon>Vertebrata</taxon>
        <taxon>Euteleostomi</taxon>
        <taxon>Actinopterygii</taxon>
        <taxon>Neopterygii</taxon>
        <taxon>Teleostei</taxon>
        <taxon>Ostariophysi</taxon>
        <taxon>Cypriniformes</taxon>
        <taxon>Danionidae</taxon>
        <taxon>Danioninae</taxon>
        <taxon>Danio</taxon>
    </lineage>
</organism>
<protein>
    <recommendedName>
        <fullName evidence="3">Protein FAM83H</fullName>
    </recommendedName>
</protein>
<feature type="chain" id="PRO_0000324490" description="Protein FAM83H">
    <location>
        <begin position="1"/>
        <end position="1192"/>
    </location>
</feature>
<feature type="region of interest" description="Disordered" evidence="2">
    <location>
        <begin position="435"/>
        <end position="542"/>
    </location>
</feature>
<feature type="region of interest" description="Disordered" evidence="2">
    <location>
        <begin position="557"/>
        <end position="661"/>
    </location>
</feature>
<feature type="region of interest" description="Disordered" evidence="2">
    <location>
        <begin position="695"/>
        <end position="720"/>
    </location>
</feature>
<feature type="region of interest" description="Disordered" evidence="2">
    <location>
        <begin position="737"/>
        <end position="1082"/>
    </location>
</feature>
<feature type="region of interest" description="Disordered" evidence="2">
    <location>
        <begin position="1094"/>
        <end position="1145"/>
    </location>
</feature>
<feature type="compositionally biased region" description="Basic and acidic residues" evidence="2">
    <location>
        <begin position="437"/>
        <end position="447"/>
    </location>
</feature>
<feature type="compositionally biased region" description="Polar residues" evidence="2">
    <location>
        <begin position="523"/>
        <end position="538"/>
    </location>
</feature>
<feature type="compositionally biased region" description="Polar residues" evidence="2">
    <location>
        <begin position="629"/>
        <end position="652"/>
    </location>
</feature>
<feature type="compositionally biased region" description="Basic and acidic residues" evidence="2">
    <location>
        <begin position="737"/>
        <end position="759"/>
    </location>
</feature>
<feature type="compositionally biased region" description="Basic and acidic residues" evidence="2">
    <location>
        <begin position="768"/>
        <end position="789"/>
    </location>
</feature>
<feature type="compositionally biased region" description="Polar residues" evidence="2">
    <location>
        <begin position="790"/>
        <end position="810"/>
    </location>
</feature>
<feature type="compositionally biased region" description="Basic and acidic residues" evidence="2">
    <location>
        <begin position="820"/>
        <end position="834"/>
    </location>
</feature>
<feature type="compositionally biased region" description="Polar residues" evidence="2">
    <location>
        <begin position="861"/>
        <end position="878"/>
    </location>
</feature>
<feature type="compositionally biased region" description="Basic and acidic residues" evidence="2">
    <location>
        <begin position="880"/>
        <end position="892"/>
    </location>
</feature>
<feature type="compositionally biased region" description="Basic and acidic residues" evidence="2">
    <location>
        <begin position="914"/>
        <end position="925"/>
    </location>
</feature>
<feature type="compositionally biased region" description="Low complexity" evidence="2">
    <location>
        <begin position="926"/>
        <end position="946"/>
    </location>
</feature>
<feature type="compositionally biased region" description="Basic and acidic residues" evidence="2">
    <location>
        <begin position="994"/>
        <end position="1005"/>
    </location>
</feature>
<feature type="compositionally biased region" description="Polar residues" evidence="2">
    <location>
        <begin position="1068"/>
        <end position="1082"/>
    </location>
</feature>
<feature type="compositionally biased region" description="Basic and acidic residues" evidence="2">
    <location>
        <begin position="1107"/>
        <end position="1122"/>
    </location>
</feature>
<accession>Q1LVV0</accession>
<reference key="1">
    <citation type="journal article" date="2013" name="Nature">
        <title>The zebrafish reference genome sequence and its relationship to the human genome.</title>
        <authorList>
            <person name="Howe K."/>
            <person name="Clark M.D."/>
            <person name="Torroja C.F."/>
            <person name="Torrance J."/>
            <person name="Berthelot C."/>
            <person name="Muffato M."/>
            <person name="Collins J.E."/>
            <person name="Humphray S."/>
            <person name="McLaren K."/>
            <person name="Matthews L."/>
            <person name="McLaren S."/>
            <person name="Sealy I."/>
            <person name="Caccamo M."/>
            <person name="Churcher C."/>
            <person name="Scott C."/>
            <person name="Barrett J.C."/>
            <person name="Koch R."/>
            <person name="Rauch G.J."/>
            <person name="White S."/>
            <person name="Chow W."/>
            <person name="Kilian B."/>
            <person name="Quintais L.T."/>
            <person name="Guerra-Assuncao J.A."/>
            <person name="Zhou Y."/>
            <person name="Gu Y."/>
            <person name="Yen J."/>
            <person name="Vogel J.H."/>
            <person name="Eyre T."/>
            <person name="Redmond S."/>
            <person name="Banerjee R."/>
            <person name="Chi J."/>
            <person name="Fu B."/>
            <person name="Langley E."/>
            <person name="Maguire S.F."/>
            <person name="Laird G.K."/>
            <person name="Lloyd D."/>
            <person name="Kenyon E."/>
            <person name="Donaldson S."/>
            <person name="Sehra H."/>
            <person name="Almeida-King J."/>
            <person name="Loveland J."/>
            <person name="Trevanion S."/>
            <person name="Jones M."/>
            <person name="Quail M."/>
            <person name="Willey D."/>
            <person name="Hunt A."/>
            <person name="Burton J."/>
            <person name="Sims S."/>
            <person name="McLay K."/>
            <person name="Plumb B."/>
            <person name="Davis J."/>
            <person name="Clee C."/>
            <person name="Oliver K."/>
            <person name="Clark R."/>
            <person name="Riddle C."/>
            <person name="Elliot D."/>
            <person name="Threadgold G."/>
            <person name="Harden G."/>
            <person name="Ware D."/>
            <person name="Begum S."/>
            <person name="Mortimore B."/>
            <person name="Kerry G."/>
            <person name="Heath P."/>
            <person name="Phillimore B."/>
            <person name="Tracey A."/>
            <person name="Corby N."/>
            <person name="Dunn M."/>
            <person name="Johnson C."/>
            <person name="Wood J."/>
            <person name="Clark S."/>
            <person name="Pelan S."/>
            <person name="Griffiths G."/>
            <person name="Smith M."/>
            <person name="Glithero R."/>
            <person name="Howden P."/>
            <person name="Barker N."/>
            <person name="Lloyd C."/>
            <person name="Stevens C."/>
            <person name="Harley J."/>
            <person name="Holt K."/>
            <person name="Panagiotidis G."/>
            <person name="Lovell J."/>
            <person name="Beasley H."/>
            <person name="Henderson C."/>
            <person name="Gordon D."/>
            <person name="Auger K."/>
            <person name="Wright D."/>
            <person name="Collins J."/>
            <person name="Raisen C."/>
            <person name="Dyer L."/>
            <person name="Leung K."/>
            <person name="Robertson L."/>
            <person name="Ambridge K."/>
            <person name="Leongamornlert D."/>
            <person name="McGuire S."/>
            <person name="Gilderthorp R."/>
            <person name="Griffiths C."/>
            <person name="Manthravadi D."/>
            <person name="Nichol S."/>
            <person name="Barker G."/>
            <person name="Whitehead S."/>
            <person name="Kay M."/>
            <person name="Brown J."/>
            <person name="Murnane C."/>
            <person name="Gray E."/>
            <person name="Humphries M."/>
            <person name="Sycamore N."/>
            <person name="Barker D."/>
            <person name="Saunders D."/>
            <person name="Wallis J."/>
            <person name="Babbage A."/>
            <person name="Hammond S."/>
            <person name="Mashreghi-Mohammadi M."/>
            <person name="Barr L."/>
            <person name="Martin S."/>
            <person name="Wray P."/>
            <person name="Ellington A."/>
            <person name="Matthews N."/>
            <person name="Ellwood M."/>
            <person name="Woodmansey R."/>
            <person name="Clark G."/>
            <person name="Cooper J."/>
            <person name="Tromans A."/>
            <person name="Grafham D."/>
            <person name="Skuce C."/>
            <person name="Pandian R."/>
            <person name="Andrews R."/>
            <person name="Harrison E."/>
            <person name="Kimberley A."/>
            <person name="Garnett J."/>
            <person name="Fosker N."/>
            <person name="Hall R."/>
            <person name="Garner P."/>
            <person name="Kelly D."/>
            <person name="Bird C."/>
            <person name="Palmer S."/>
            <person name="Gehring I."/>
            <person name="Berger A."/>
            <person name="Dooley C.M."/>
            <person name="Ersan-Urun Z."/>
            <person name="Eser C."/>
            <person name="Geiger H."/>
            <person name="Geisler M."/>
            <person name="Karotki L."/>
            <person name="Kirn A."/>
            <person name="Konantz J."/>
            <person name="Konantz M."/>
            <person name="Oberlander M."/>
            <person name="Rudolph-Geiger S."/>
            <person name="Teucke M."/>
            <person name="Lanz C."/>
            <person name="Raddatz G."/>
            <person name="Osoegawa K."/>
            <person name="Zhu B."/>
            <person name="Rapp A."/>
            <person name="Widaa S."/>
            <person name="Langford C."/>
            <person name="Yang F."/>
            <person name="Schuster S.C."/>
            <person name="Carter N.P."/>
            <person name="Harrow J."/>
            <person name="Ning Z."/>
            <person name="Herrero J."/>
            <person name="Searle S.M."/>
            <person name="Enright A."/>
            <person name="Geisler R."/>
            <person name="Plasterk R.H."/>
            <person name="Lee C."/>
            <person name="Westerfield M."/>
            <person name="de Jong P.J."/>
            <person name="Zon L.I."/>
            <person name="Postlethwait J.H."/>
            <person name="Nusslein-Volhard C."/>
            <person name="Hubbard T.J."/>
            <person name="Roest Crollius H."/>
            <person name="Rogers J."/>
            <person name="Stemple D.L."/>
        </authorList>
    </citation>
    <scope>NUCLEOTIDE SEQUENCE [LARGE SCALE GENOMIC DNA]</scope>
    <source>
        <strain>Tuebingen</strain>
    </source>
</reference>
<gene>
    <name evidence="1" type="primary">fam83h</name>
    <name type="ORF">si:ch211-199g17.1</name>
</gene>
<keyword id="KW-0963">Cytoplasm</keyword>
<keyword id="KW-0206">Cytoskeleton</keyword>
<keyword id="KW-1185">Reference proteome</keyword>
<dbReference type="EMBL" id="BX649384">
    <property type="protein sequence ID" value="CAK04374.1"/>
    <property type="molecule type" value="Genomic_DNA"/>
</dbReference>
<dbReference type="RefSeq" id="NP_001038555.1">
    <property type="nucleotide sequence ID" value="NM_001045090.2"/>
</dbReference>
<dbReference type="SMR" id="Q1LVV0"/>
<dbReference type="FunCoup" id="Q1LVV0">
    <property type="interactions" value="1720"/>
</dbReference>
<dbReference type="STRING" id="7955.ENSDARP00000080573"/>
<dbReference type="PaxDb" id="7955-ENSDARP00000080573"/>
<dbReference type="Ensembl" id="ENSDART00000086138">
    <property type="protein sequence ID" value="ENSDARP00000080573"/>
    <property type="gene ID" value="ENSDARG00000060830"/>
</dbReference>
<dbReference type="AGR" id="ZFIN:ZDB-GENE-030131-6729"/>
<dbReference type="ZFIN" id="ZDB-GENE-030131-6729">
    <property type="gene designation" value="fam83hb"/>
</dbReference>
<dbReference type="eggNOG" id="ENOG502QW7K">
    <property type="taxonomic scope" value="Eukaryota"/>
</dbReference>
<dbReference type="InParanoid" id="Q1LVV0"/>
<dbReference type="OMA" id="GCHGEDT"/>
<dbReference type="OrthoDB" id="9832446at2759"/>
<dbReference type="PhylomeDB" id="Q1LVV0"/>
<dbReference type="PRO" id="PR:Q1LVV0"/>
<dbReference type="Proteomes" id="UP000000437">
    <property type="component" value="Chromosome 19"/>
</dbReference>
<dbReference type="Bgee" id="ENSDARG00000060830">
    <property type="expression patterns" value="Expressed in zone of skin and 19 other cell types or tissues"/>
</dbReference>
<dbReference type="ExpressionAtlas" id="Q1LVV0">
    <property type="expression patterns" value="baseline and differential"/>
</dbReference>
<dbReference type="GO" id="GO:0005737">
    <property type="term" value="C:cytoplasm"/>
    <property type="evidence" value="ECO:0007669"/>
    <property type="project" value="UniProtKB-KW"/>
</dbReference>
<dbReference type="GO" id="GO:0005856">
    <property type="term" value="C:cytoskeleton"/>
    <property type="evidence" value="ECO:0007669"/>
    <property type="project" value="UniProtKB-SubCell"/>
</dbReference>
<dbReference type="GO" id="GO:1990254">
    <property type="term" value="F:keratin filament binding"/>
    <property type="evidence" value="ECO:0000318"/>
    <property type="project" value="GO_Central"/>
</dbReference>
<dbReference type="GO" id="GO:0019901">
    <property type="term" value="F:protein kinase binding"/>
    <property type="evidence" value="ECO:0000318"/>
    <property type="project" value="GO_Central"/>
</dbReference>
<dbReference type="GO" id="GO:0045104">
    <property type="term" value="P:intermediate filament cytoskeleton organization"/>
    <property type="evidence" value="ECO:0000250"/>
    <property type="project" value="UniProtKB"/>
</dbReference>
<dbReference type="GO" id="GO:0030335">
    <property type="term" value="P:positive regulation of cell migration"/>
    <property type="evidence" value="ECO:0000318"/>
    <property type="project" value="GO_Central"/>
</dbReference>
<dbReference type="GO" id="GO:0044380">
    <property type="term" value="P:protein localization to cytoskeleton"/>
    <property type="evidence" value="ECO:0000318"/>
    <property type="project" value="GO_Central"/>
</dbReference>
<dbReference type="GO" id="GO:0007165">
    <property type="term" value="P:signal transduction"/>
    <property type="evidence" value="ECO:0000318"/>
    <property type="project" value="GO_Central"/>
</dbReference>
<dbReference type="CDD" id="cd09188">
    <property type="entry name" value="PLDc_FAM83H_N"/>
    <property type="match status" value="1"/>
</dbReference>
<dbReference type="FunFam" id="3.30.870.10:FF:000004">
    <property type="entry name" value="protein FAM83H isoform X2"/>
    <property type="match status" value="1"/>
</dbReference>
<dbReference type="Gene3D" id="3.30.870.10">
    <property type="entry name" value="Endonuclease Chain A"/>
    <property type="match status" value="1"/>
</dbReference>
<dbReference type="InterPro" id="IPR050944">
    <property type="entry name" value="FAM83"/>
</dbReference>
<dbReference type="InterPro" id="IPR041996">
    <property type="entry name" value="PLDc_FAM83H_N"/>
</dbReference>
<dbReference type="InterPro" id="IPR012461">
    <property type="entry name" value="SACK1"/>
</dbReference>
<dbReference type="PANTHER" id="PTHR16181">
    <property type="entry name" value="PROTEIN FAM83A-RELATED"/>
    <property type="match status" value="1"/>
</dbReference>
<dbReference type="PANTHER" id="PTHR16181:SF26">
    <property type="entry name" value="PROTEIN FAM83H"/>
    <property type="match status" value="1"/>
</dbReference>
<dbReference type="Pfam" id="PF07894">
    <property type="entry name" value="SACK1"/>
    <property type="match status" value="1"/>
</dbReference>
<dbReference type="SUPFAM" id="SSF56024">
    <property type="entry name" value="Phospholipase D/nuclease"/>
    <property type="match status" value="1"/>
</dbReference>